<organism>
    <name type="scientific">Salinispora tropica (strain ATCC BAA-916 / DSM 44818 / JCM 13857 / NBRC 105044 / CNB-440)</name>
    <dbReference type="NCBI Taxonomy" id="369723"/>
    <lineage>
        <taxon>Bacteria</taxon>
        <taxon>Bacillati</taxon>
        <taxon>Actinomycetota</taxon>
        <taxon>Actinomycetes</taxon>
        <taxon>Micromonosporales</taxon>
        <taxon>Micromonosporaceae</taxon>
        <taxon>Salinispora</taxon>
    </lineage>
</organism>
<protein>
    <recommendedName>
        <fullName evidence="1">Methionine--tRNA ligase</fullName>
        <ecNumber evidence="1">6.1.1.10</ecNumber>
    </recommendedName>
    <alternativeName>
        <fullName evidence="1">Methionyl-tRNA synthetase</fullName>
        <shortName evidence="1">MetRS</shortName>
    </alternativeName>
</protein>
<gene>
    <name evidence="1" type="primary">metG</name>
    <name type="ordered locus">Strop_0780</name>
</gene>
<sequence length="603" mass="66602">MLVMSHVLAAVAWPYANGPRHIGHVSGFGVPSDVFARYMRMAGHDVLMVSGTDEHGTPIQVQADAEGVTPRELADRYNRVIVADLHGLGLTYDLFTRTTTGNHYAVVQELFEGMYRNGYIVSKTTMGAISPSTGRTLPDRYIEGTCPICGYESARGDQCDSCGNQLDPIDLRNPKSKINGETPKFVETEHFFLDLPALAGVLGQWLDTREGWRPNVLRFSKNLLDDLQPRAITRDLEWGVPIPLDGWRERGDKRIYVWFDAVIGYLSASIEWARRSGDPQAWRRWWSADGPGKDAPSHYFMGKDNIVFHSVIWPALLAGYSGEGSHDGQPGELGRLNLPTEVVSSEFLTMEGRKFSSSRRVVIYVRDFLERYDADALRYFIAVAGPESNDTDFTWAEFLRRNNDELVAGWGNLVNRSISMAAKNFGAIPPVDPAGLTEADETLLAVARAGFDTVGELIGRHRQKQAIGEAMKVVAEANRYLSEQAPWKLKGEADRPRMGTVLHVALQVVSDANTLLTPFLPHSAQKIHQLLGGTGVHAPMPVIEEVEDLDGGPAYPVLTGDYTVGARWESVPLAVGRALDPPKPVFRKLDPSIVDEELARLAG</sequence>
<name>SYM_SALTO</name>
<accession>A4X307</accession>
<feature type="chain" id="PRO_0000331898" description="Methionine--tRNA ligase">
    <location>
        <begin position="1"/>
        <end position="603"/>
    </location>
</feature>
<feature type="short sequence motif" description="'HIGH' region">
    <location>
        <begin position="14"/>
        <end position="24"/>
    </location>
</feature>
<feature type="short sequence motif" description="'KMSKS' region">
    <location>
        <begin position="354"/>
        <end position="358"/>
    </location>
</feature>
<feature type="binding site" evidence="1">
    <location>
        <position position="146"/>
    </location>
    <ligand>
        <name>Zn(2+)</name>
        <dbReference type="ChEBI" id="CHEBI:29105"/>
    </ligand>
</feature>
<feature type="binding site" evidence="1">
    <location>
        <position position="149"/>
    </location>
    <ligand>
        <name>Zn(2+)</name>
        <dbReference type="ChEBI" id="CHEBI:29105"/>
    </ligand>
</feature>
<feature type="binding site" evidence="1">
    <location>
        <position position="159"/>
    </location>
    <ligand>
        <name>Zn(2+)</name>
        <dbReference type="ChEBI" id="CHEBI:29105"/>
    </ligand>
</feature>
<feature type="binding site" evidence="1">
    <location>
        <position position="162"/>
    </location>
    <ligand>
        <name>Zn(2+)</name>
        <dbReference type="ChEBI" id="CHEBI:29105"/>
    </ligand>
</feature>
<feature type="binding site" evidence="1">
    <location>
        <position position="357"/>
    </location>
    <ligand>
        <name>ATP</name>
        <dbReference type="ChEBI" id="CHEBI:30616"/>
    </ligand>
</feature>
<comment type="function">
    <text evidence="1">Is required not only for elongation of protein synthesis but also for the initiation of all mRNA translation through initiator tRNA(fMet) aminoacylation.</text>
</comment>
<comment type="catalytic activity">
    <reaction evidence="1">
        <text>tRNA(Met) + L-methionine + ATP = L-methionyl-tRNA(Met) + AMP + diphosphate</text>
        <dbReference type="Rhea" id="RHEA:13481"/>
        <dbReference type="Rhea" id="RHEA-COMP:9667"/>
        <dbReference type="Rhea" id="RHEA-COMP:9698"/>
        <dbReference type="ChEBI" id="CHEBI:30616"/>
        <dbReference type="ChEBI" id="CHEBI:33019"/>
        <dbReference type="ChEBI" id="CHEBI:57844"/>
        <dbReference type="ChEBI" id="CHEBI:78442"/>
        <dbReference type="ChEBI" id="CHEBI:78530"/>
        <dbReference type="ChEBI" id="CHEBI:456215"/>
        <dbReference type="EC" id="6.1.1.10"/>
    </reaction>
</comment>
<comment type="cofactor">
    <cofactor evidence="1">
        <name>Zn(2+)</name>
        <dbReference type="ChEBI" id="CHEBI:29105"/>
    </cofactor>
    <text evidence="1">Binds 1 zinc ion per subunit.</text>
</comment>
<comment type="subunit">
    <text evidence="1">Monomer.</text>
</comment>
<comment type="subcellular location">
    <subcellularLocation>
        <location evidence="1">Cytoplasm</location>
    </subcellularLocation>
</comment>
<comment type="similarity">
    <text evidence="1">Belongs to the class-I aminoacyl-tRNA synthetase family. MetG type 1 subfamily.</text>
</comment>
<proteinExistence type="inferred from homology"/>
<evidence type="ECO:0000255" key="1">
    <source>
        <dbReference type="HAMAP-Rule" id="MF_00098"/>
    </source>
</evidence>
<dbReference type="EC" id="6.1.1.10" evidence="1"/>
<dbReference type="EMBL" id="CP000667">
    <property type="protein sequence ID" value="ABP53257.1"/>
    <property type="molecule type" value="Genomic_DNA"/>
</dbReference>
<dbReference type="SMR" id="A4X307"/>
<dbReference type="STRING" id="369723.Strop_0780"/>
<dbReference type="KEGG" id="stp:Strop_0780"/>
<dbReference type="eggNOG" id="COG0143">
    <property type="taxonomic scope" value="Bacteria"/>
</dbReference>
<dbReference type="HOGENOM" id="CLU_009710_1_2_11"/>
<dbReference type="Proteomes" id="UP000000235">
    <property type="component" value="Chromosome"/>
</dbReference>
<dbReference type="GO" id="GO:0005829">
    <property type="term" value="C:cytosol"/>
    <property type="evidence" value="ECO:0007669"/>
    <property type="project" value="TreeGrafter"/>
</dbReference>
<dbReference type="GO" id="GO:0005524">
    <property type="term" value="F:ATP binding"/>
    <property type="evidence" value="ECO:0007669"/>
    <property type="project" value="UniProtKB-UniRule"/>
</dbReference>
<dbReference type="GO" id="GO:0046872">
    <property type="term" value="F:metal ion binding"/>
    <property type="evidence" value="ECO:0007669"/>
    <property type="project" value="UniProtKB-KW"/>
</dbReference>
<dbReference type="GO" id="GO:0004825">
    <property type="term" value="F:methionine-tRNA ligase activity"/>
    <property type="evidence" value="ECO:0007669"/>
    <property type="project" value="UniProtKB-UniRule"/>
</dbReference>
<dbReference type="GO" id="GO:0006431">
    <property type="term" value="P:methionyl-tRNA aminoacylation"/>
    <property type="evidence" value="ECO:0007669"/>
    <property type="project" value="UniProtKB-UniRule"/>
</dbReference>
<dbReference type="CDD" id="cd07957">
    <property type="entry name" value="Anticodon_Ia_Met"/>
    <property type="match status" value="1"/>
</dbReference>
<dbReference type="CDD" id="cd00814">
    <property type="entry name" value="MetRS_core"/>
    <property type="match status" value="1"/>
</dbReference>
<dbReference type="FunFam" id="2.20.28.20:FF:000001">
    <property type="entry name" value="Methionine--tRNA ligase"/>
    <property type="match status" value="1"/>
</dbReference>
<dbReference type="Gene3D" id="3.40.50.620">
    <property type="entry name" value="HUPs"/>
    <property type="match status" value="1"/>
</dbReference>
<dbReference type="Gene3D" id="1.10.730.10">
    <property type="entry name" value="Isoleucyl-tRNA Synthetase, Domain 1"/>
    <property type="match status" value="1"/>
</dbReference>
<dbReference type="Gene3D" id="2.20.28.20">
    <property type="entry name" value="Methionyl-tRNA synthetase, Zn-domain"/>
    <property type="match status" value="1"/>
</dbReference>
<dbReference type="HAMAP" id="MF_00098">
    <property type="entry name" value="Met_tRNA_synth_type1"/>
    <property type="match status" value="1"/>
</dbReference>
<dbReference type="InterPro" id="IPR041872">
    <property type="entry name" value="Anticodon_Met"/>
</dbReference>
<dbReference type="InterPro" id="IPR023458">
    <property type="entry name" value="Met-tRNA_ligase_1"/>
</dbReference>
<dbReference type="InterPro" id="IPR014758">
    <property type="entry name" value="Met-tRNA_synth"/>
</dbReference>
<dbReference type="InterPro" id="IPR015413">
    <property type="entry name" value="Methionyl/Leucyl_tRNA_Synth"/>
</dbReference>
<dbReference type="InterPro" id="IPR033911">
    <property type="entry name" value="MetRS_core"/>
</dbReference>
<dbReference type="InterPro" id="IPR029038">
    <property type="entry name" value="MetRS_Zn"/>
</dbReference>
<dbReference type="InterPro" id="IPR014729">
    <property type="entry name" value="Rossmann-like_a/b/a_fold"/>
</dbReference>
<dbReference type="InterPro" id="IPR009080">
    <property type="entry name" value="tRNAsynth_Ia_anticodon-bd"/>
</dbReference>
<dbReference type="NCBIfam" id="TIGR00398">
    <property type="entry name" value="metG"/>
    <property type="match status" value="1"/>
</dbReference>
<dbReference type="PANTHER" id="PTHR45765">
    <property type="entry name" value="METHIONINE--TRNA LIGASE"/>
    <property type="match status" value="1"/>
</dbReference>
<dbReference type="PANTHER" id="PTHR45765:SF1">
    <property type="entry name" value="METHIONINE--TRNA LIGASE, CYTOPLASMIC"/>
    <property type="match status" value="1"/>
</dbReference>
<dbReference type="Pfam" id="PF19303">
    <property type="entry name" value="Anticodon_3"/>
    <property type="match status" value="1"/>
</dbReference>
<dbReference type="Pfam" id="PF09334">
    <property type="entry name" value="tRNA-synt_1g"/>
    <property type="match status" value="1"/>
</dbReference>
<dbReference type="PRINTS" id="PR01041">
    <property type="entry name" value="TRNASYNTHMET"/>
</dbReference>
<dbReference type="SUPFAM" id="SSF47323">
    <property type="entry name" value="Anticodon-binding domain of a subclass of class I aminoacyl-tRNA synthetases"/>
    <property type="match status" value="1"/>
</dbReference>
<dbReference type="SUPFAM" id="SSF57770">
    <property type="entry name" value="Methionyl-tRNA synthetase (MetRS), Zn-domain"/>
    <property type="match status" value="1"/>
</dbReference>
<dbReference type="SUPFAM" id="SSF52374">
    <property type="entry name" value="Nucleotidylyl transferase"/>
    <property type="match status" value="1"/>
</dbReference>
<reference key="1">
    <citation type="journal article" date="2007" name="Proc. Natl. Acad. Sci. U.S.A.">
        <title>Genome sequencing reveals complex secondary metabolome in the marine actinomycete Salinispora tropica.</title>
        <authorList>
            <person name="Udwary D.W."/>
            <person name="Zeigler L."/>
            <person name="Asolkar R.N."/>
            <person name="Singan V."/>
            <person name="Lapidus A."/>
            <person name="Fenical W."/>
            <person name="Jensen P.R."/>
            <person name="Moore B.S."/>
        </authorList>
    </citation>
    <scope>NUCLEOTIDE SEQUENCE [LARGE SCALE GENOMIC DNA]</scope>
    <source>
        <strain>ATCC BAA-916 / DSM 44818 / JCM 13857 / NBRC 105044 / CNB-440</strain>
    </source>
</reference>
<keyword id="KW-0030">Aminoacyl-tRNA synthetase</keyword>
<keyword id="KW-0067">ATP-binding</keyword>
<keyword id="KW-0963">Cytoplasm</keyword>
<keyword id="KW-0436">Ligase</keyword>
<keyword id="KW-0479">Metal-binding</keyword>
<keyword id="KW-0547">Nucleotide-binding</keyword>
<keyword id="KW-0648">Protein biosynthesis</keyword>
<keyword id="KW-1185">Reference proteome</keyword>
<keyword id="KW-0862">Zinc</keyword>